<dbReference type="EC" id="1.3.5.2" evidence="1"/>
<dbReference type="EMBL" id="AP008229">
    <property type="protein sequence ID" value="BAE68857.1"/>
    <property type="molecule type" value="Genomic_DNA"/>
</dbReference>
<dbReference type="RefSeq" id="WP_011258927.1">
    <property type="nucleotide sequence ID" value="NC_007705.1"/>
</dbReference>
<dbReference type="SMR" id="Q2P3M0"/>
<dbReference type="KEGG" id="xom:XOO2102"/>
<dbReference type="HOGENOM" id="CLU_013640_2_0_6"/>
<dbReference type="UniPathway" id="UPA00070">
    <property type="reaction ID" value="UER00946"/>
</dbReference>
<dbReference type="GO" id="GO:0005737">
    <property type="term" value="C:cytoplasm"/>
    <property type="evidence" value="ECO:0007669"/>
    <property type="project" value="InterPro"/>
</dbReference>
<dbReference type="GO" id="GO:0005886">
    <property type="term" value="C:plasma membrane"/>
    <property type="evidence" value="ECO:0007669"/>
    <property type="project" value="UniProtKB-SubCell"/>
</dbReference>
<dbReference type="GO" id="GO:0106430">
    <property type="term" value="F:dihydroorotate dehydrogenase (quinone) activity"/>
    <property type="evidence" value="ECO:0007669"/>
    <property type="project" value="UniProtKB-EC"/>
</dbReference>
<dbReference type="GO" id="GO:0006207">
    <property type="term" value="P:'de novo' pyrimidine nucleobase biosynthetic process"/>
    <property type="evidence" value="ECO:0007669"/>
    <property type="project" value="InterPro"/>
</dbReference>
<dbReference type="GO" id="GO:0044205">
    <property type="term" value="P:'de novo' UMP biosynthetic process"/>
    <property type="evidence" value="ECO:0007669"/>
    <property type="project" value="UniProtKB-UniRule"/>
</dbReference>
<dbReference type="CDD" id="cd04738">
    <property type="entry name" value="DHOD_2_like"/>
    <property type="match status" value="1"/>
</dbReference>
<dbReference type="FunFam" id="3.20.20.70:FF:000028">
    <property type="entry name" value="Dihydroorotate dehydrogenase (quinone)"/>
    <property type="match status" value="1"/>
</dbReference>
<dbReference type="Gene3D" id="3.20.20.70">
    <property type="entry name" value="Aldolase class I"/>
    <property type="match status" value="1"/>
</dbReference>
<dbReference type="HAMAP" id="MF_00225">
    <property type="entry name" value="DHO_dh_type2"/>
    <property type="match status" value="1"/>
</dbReference>
<dbReference type="InterPro" id="IPR013785">
    <property type="entry name" value="Aldolase_TIM"/>
</dbReference>
<dbReference type="InterPro" id="IPR050074">
    <property type="entry name" value="DHO_dehydrogenase"/>
</dbReference>
<dbReference type="InterPro" id="IPR012135">
    <property type="entry name" value="Dihydroorotate_DH_1_2"/>
</dbReference>
<dbReference type="InterPro" id="IPR005719">
    <property type="entry name" value="Dihydroorotate_DH_2"/>
</dbReference>
<dbReference type="InterPro" id="IPR005720">
    <property type="entry name" value="Dihydroorotate_DH_cat"/>
</dbReference>
<dbReference type="InterPro" id="IPR001295">
    <property type="entry name" value="Dihydroorotate_DH_CS"/>
</dbReference>
<dbReference type="NCBIfam" id="NF003644">
    <property type="entry name" value="PRK05286.1-1"/>
    <property type="match status" value="1"/>
</dbReference>
<dbReference type="NCBIfam" id="NF003645">
    <property type="entry name" value="PRK05286.1-2"/>
    <property type="match status" value="1"/>
</dbReference>
<dbReference type="NCBIfam" id="NF003646">
    <property type="entry name" value="PRK05286.1-4"/>
    <property type="match status" value="1"/>
</dbReference>
<dbReference type="NCBIfam" id="NF003652">
    <property type="entry name" value="PRK05286.2-5"/>
    <property type="match status" value="1"/>
</dbReference>
<dbReference type="NCBIfam" id="TIGR01036">
    <property type="entry name" value="pyrD_sub2"/>
    <property type="match status" value="1"/>
</dbReference>
<dbReference type="PANTHER" id="PTHR48109:SF4">
    <property type="entry name" value="DIHYDROOROTATE DEHYDROGENASE (QUINONE), MITOCHONDRIAL"/>
    <property type="match status" value="1"/>
</dbReference>
<dbReference type="PANTHER" id="PTHR48109">
    <property type="entry name" value="DIHYDROOROTATE DEHYDROGENASE (QUINONE), MITOCHONDRIAL-RELATED"/>
    <property type="match status" value="1"/>
</dbReference>
<dbReference type="Pfam" id="PF01180">
    <property type="entry name" value="DHO_dh"/>
    <property type="match status" value="1"/>
</dbReference>
<dbReference type="PIRSF" id="PIRSF000164">
    <property type="entry name" value="DHO_oxidase"/>
    <property type="match status" value="1"/>
</dbReference>
<dbReference type="SUPFAM" id="SSF51395">
    <property type="entry name" value="FMN-linked oxidoreductases"/>
    <property type="match status" value="1"/>
</dbReference>
<dbReference type="PROSITE" id="PS00911">
    <property type="entry name" value="DHODEHASE_1"/>
    <property type="match status" value="1"/>
</dbReference>
<dbReference type="PROSITE" id="PS00912">
    <property type="entry name" value="DHODEHASE_2"/>
    <property type="match status" value="1"/>
</dbReference>
<name>PYRD_XANOM</name>
<protein>
    <recommendedName>
        <fullName evidence="1">Dihydroorotate dehydrogenase (quinone)</fullName>
        <ecNumber evidence="1">1.3.5.2</ecNumber>
    </recommendedName>
    <alternativeName>
        <fullName evidence="1">DHOdehase</fullName>
        <shortName evidence="1">DHOD</shortName>
        <shortName evidence="1">DHODase</shortName>
    </alternativeName>
    <alternativeName>
        <fullName evidence="1">Dihydroorotate oxidase</fullName>
    </alternativeName>
</protein>
<accession>Q2P3M0</accession>
<gene>
    <name evidence="1" type="primary">pyrD</name>
    <name type="ordered locus">XOO2102</name>
</gene>
<proteinExistence type="inferred from homology"/>
<sequence>MYSLARPLLFSLDAERAHALALRSIDTAYRTGTTSLLSTRPVPLPTPAFGLMFPNPVGLGAGLDKNGEHIDALLALGFGFVEIGTVTPRAQDGNPKPRMFRLPEYQAVINRMGFNNLGVDALVANVQRARRRGGLLGINIGKNKDTPNEEATSDYRYCMERVYPLADYITVNISSPNTAGLRELQEEQSLRRLISDLRETQEALGAQHGKRVPMLVKVAPDLNDRDIDAAARVLADLAVDGVIATNTTVTRPLIANHPLAAEAGGLSGAPLLGQSTLVLRRLRARLPESIPLIGVGGINSGADAVAKMAAGASLVQCYSGLVYRGPQLVGECVNAIRRRREAPSGGAVAPL</sequence>
<reference key="1">
    <citation type="journal article" date="2005" name="Jpn. Agric. Res. Q.">
        <title>Genome sequence of Xanthomonas oryzae pv. oryzae suggests contribution of large numbers of effector genes and insertion sequences to its race diversity.</title>
        <authorList>
            <person name="Ochiai H."/>
            <person name="Inoue Y."/>
            <person name="Takeya M."/>
            <person name="Sasaki A."/>
            <person name="Kaku H."/>
        </authorList>
    </citation>
    <scope>NUCLEOTIDE SEQUENCE [LARGE SCALE GENOMIC DNA]</scope>
    <source>
        <strain>MAFF 311018</strain>
    </source>
</reference>
<feature type="chain" id="PRO_1000024246" description="Dihydroorotate dehydrogenase (quinone)">
    <location>
        <begin position="1"/>
        <end position="351"/>
    </location>
</feature>
<feature type="active site" description="Nucleophile" evidence="1">
    <location>
        <position position="175"/>
    </location>
</feature>
<feature type="binding site" evidence="1">
    <location>
        <begin position="61"/>
        <end position="65"/>
    </location>
    <ligand>
        <name>FMN</name>
        <dbReference type="ChEBI" id="CHEBI:58210"/>
    </ligand>
</feature>
<feature type="binding site" evidence="1">
    <location>
        <position position="65"/>
    </location>
    <ligand>
        <name>substrate</name>
    </ligand>
</feature>
<feature type="binding site" evidence="1">
    <location>
        <position position="85"/>
    </location>
    <ligand>
        <name>FMN</name>
        <dbReference type="ChEBI" id="CHEBI:58210"/>
    </ligand>
</feature>
<feature type="binding site" evidence="1">
    <location>
        <begin position="110"/>
        <end position="114"/>
    </location>
    <ligand>
        <name>substrate</name>
    </ligand>
</feature>
<feature type="binding site" evidence="1">
    <location>
        <position position="139"/>
    </location>
    <ligand>
        <name>FMN</name>
        <dbReference type="ChEBI" id="CHEBI:58210"/>
    </ligand>
</feature>
<feature type="binding site" evidence="1">
    <location>
        <position position="172"/>
    </location>
    <ligand>
        <name>FMN</name>
        <dbReference type="ChEBI" id="CHEBI:58210"/>
    </ligand>
</feature>
<feature type="binding site" evidence="1">
    <location>
        <position position="172"/>
    </location>
    <ligand>
        <name>substrate</name>
    </ligand>
</feature>
<feature type="binding site" evidence="1">
    <location>
        <position position="177"/>
    </location>
    <ligand>
        <name>substrate</name>
    </ligand>
</feature>
<feature type="binding site" evidence="1">
    <location>
        <position position="217"/>
    </location>
    <ligand>
        <name>FMN</name>
        <dbReference type="ChEBI" id="CHEBI:58210"/>
    </ligand>
</feature>
<feature type="binding site" evidence="1">
    <location>
        <position position="245"/>
    </location>
    <ligand>
        <name>FMN</name>
        <dbReference type="ChEBI" id="CHEBI:58210"/>
    </ligand>
</feature>
<feature type="binding site" evidence="1">
    <location>
        <begin position="246"/>
        <end position="247"/>
    </location>
    <ligand>
        <name>substrate</name>
    </ligand>
</feature>
<feature type="binding site" evidence="1">
    <location>
        <position position="268"/>
    </location>
    <ligand>
        <name>FMN</name>
        <dbReference type="ChEBI" id="CHEBI:58210"/>
    </ligand>
</feature>
<feature type="binding site" evidence="1">
    <location>
        <position position="297"/>
    </location>
    <ligand>
        <name>FMN</name>
        <dbReference type="ChEBI" id="CHEBI:58210"/>
    </ligand>
</feature>
<feature type="binding site" evidence="1">
    <location>
        <begin position="318"/>
        <end position="319"/>
    </location>
    <ligand>
        <name>FMN</name>
        <dbReference type="ChEBI" id="CHEBI:58210"/>
    </ligand>
</feature>
<keyword id="KW-1003">Cell membrane</keyword>
<keyword id="KW-0285">Flavoprotein</keyword>
<keyword id="KW-0288">FMN</keyword>
<keyword id="KW-0472">Membrane</keyword>
<keyword id="KW-0560">Oxidoreductase</keyword>
<keyword id="KW-0665">Pyrimidine biosynthesis</keyword>
<evidence type="ECO:0000255" key="1">
    <source>
        <dbReference type="HAMAP-Rule" id="MF_00225"/>
    </source>
</evidence>
<organism>
    <name type="scientific">Xanthomonas oryzae pv. oryzae (strain MAFF 311018)</name>
    <dbReference type="NCBI Taxonomy" id="342109"/>
    <lineage>
        <taxon>Bacteria</taxon>
        <taxon>Pseudomonadati</taxon>
        <taxon>Pseudomonadota</taxon>
        <taxon>Gammaproteobacteria</taxon>
        <taxon>Lysobacterales</taxon>
        <taxon>Lysobacteraceae</taxon>
        <taxon>Xanthomonas</taxon>
    </lineage>
</organism>
<comment type="function">
    <text evidence="1">Catalyzes the conversion of dihydroorotate to orotate with quinone as electron acceptor.</text>
</comment>
<comment type="catalytic activity">
    <reaction evidence="1">
        <text>(S)-dihydroorotate + a quinone = orotate + a quinol</text>
        <dbReference type="Rhea" id="RHEA:30187"/>
        <dbReference type="ChEBI" id="CHEBI:24646"/>
        <dbReference type="ChEBI" id="CHEBI:30839"/>
        <dbReference type="ChEBI" id="CHEBI:30864"/>
        <dbReference type="ChEBI" id="CHEBI:132124"/>
        <dbReference type="EC" id="1.3.5.2"/>
    </reaction>
</comment>
<comment type="cofactor">
    <cofactor evidence="1">
        <name>FMN</name>
        <dbReference type="ChEBI" id="CHEBI:58210"/>
    </cofactor>
    <text evidence="1">Binds 1 FMN per subunit.</text>
</comment>
<comment type="pathway">
    <text evidence="1">Pyrimidine metabolism; UMP biosynthesis via de novo pathway; orotate from (S)-dihydroorotate (quinone route): step 1/1.</text>
</comment>
<comment type="subunit">
    <text evidence="1">Monomer.</text>
</comment>
<comment type="subcellular location">
    <subcellularLocation>
        <location evidence="1">Cell membrane</location>
        <topology evidence="1">Peripheral membrane protein</topology>
    </subcellularLocation>
</comment>
<comment type="similarity">
    <text evidence="1">Belongs to the dihydroorotate dehydrogenase family. Type 2 subfamily.</text>
</comment>